<organism>
    <name type="scientific">Homo sapiens</name>
    <name type="common">Human</name>
    <dbReference type="NCBI Taxonomy" id="9606"/>
    <lineage>
        <taxon>Eukaryota</taxon>
        <taxon>Metazoa</taxon>
        <taxon>Chordata</taxon>
        <taxon>Craniata</taxon>
        <taxon>Vertebrata</taxon>
        <taxon>Euteleostomi</taxon>
        <taxon>Mammalia</taxon>
        <taxon>Eutheria</taxon>
        <taxon>Euarchontoglires</taxon>
        <taxon>Primates</taxon>
        <taxon>Haplorrhini</taxon>
        <taxon>Catarrhini</taxon>
        <taxon>Hominidae</taxon>
        <taxon>Homo</taxon>
    </lineage>
</organism>
<keyword id="KW-1185">Reference proteome</keyword>
<feature type="chain" id="PRO_0000247126" description="Putative uncharacterized protein encoded by MIR1915-HG">
    <location>
        <begin position="1"/>
        <end position="136"/>
    </location>
</feature>
<feature type="region of interest" description="Disordered" evidence="1">
    <location>
        <begin position="1"/>
        <end position="100"/>
    </location>
</feature>
<feature type="compositionally biased region" description="Basic residues" evidence="1">
    <location>
        <begin position="66"/>
        <end position="75"/>
    </location>
</feature>
<feature type="sequence variant" id="VAR_033739" description="In dbSNP:rs11012724.">
    <original>R</original>
    <variation>P</variation>
    <location>
        <position position="73"/>
    </location>
</feature>
<evidence type="ECO:0000256" key="1">
    <source>
        <dbReference type="SAM" id="MobiDB-lite"/>
    </source>
</evidence>
<evidence type="ECO:0000305" key="2"/>
<evidence type="ECO:0000312" key="3">
    <source>
        <dbReference type="HGNC" id="HGNC:31448"/>
    </source>
</evidence>
<accession>Q5T4H9</accession>
<accession>A1L4M3</accession>
<comment type="caution">
    <text evidence="2">Product of a dubious CDS prediction. May be a non-coding RNA.</text>
</comment>
<gene>
    <name evidence="3" type="primary">MIR1915HG</name>
    <name evidence="3" type="synonym">C10orf114</name>
    <name evidence="3" type="synonym">CASC10</name>
</gene>
<protein>
    <recommendedName>
        <fullName evidence="2">Putative uncharacterized protein encoded by MIR1915-HG</fullName>
    </recommendedName>
    <alternativeName>
        <fullName evidence="3">Cancer susceptibility 10 protein</fullName>
    </alternativeName>
    <alternativeName>
        <fullName evidence="3">Cancer susceptibility candidate gene 10 protein</fullName>
    </alternativeName>
    <alternativeName>
        <fullName evidence="3">MIR1915 host gene protein</fullName>
    </alternativeName>
</protein>
<dbReference type="EMBL" id="AL358780">
    <property type="status" value="NOT_ANNOTATED_CDS"/>
    <property type="molecule type" value="Genomic_DNA"/>
</dbReference>
<dbReference type="EMBL" id="BC130594">
    <property type="protein sequence ID" value="AAI30595.1"/>
    <property type="molecule type" value="mRNA"/>
</dbReference>
<dbReference type="EMBL" id="BC132974">
    <property type="protein sequence ID" value="AAI32975.1"/>
    <property type="molecule type" value="mRNA"/>
</dbReference>
<dbReference type="RefSeq" id="NP_001010911.1">
    <property type="nucleotide sequence ID" value="NM_001010911.2"/>
</dbReference>
<dbReference type="BioGRID" id="134397">
    <property type="interactions" value="2"/>
</dbReference>
<dbReference type="iPTMnet" id="Q5T4H9"/>
<dbReference type="PhosphoSitePlus" id="Q5T4H9"/>
<dbReference type="BioMuta" id="CASC10"/>
<dbReference type="MassIVE" id="Q5T4H9"/>
<dbReference type="PaxDb" id="9606-ENSP00000366317"/>
<dbReference type="UCSC" id="uc001iqn.5">
    <property type="organism name" value="human"/>
</dbReference>
<dbReference type="AGR" id="HGNC:31448"/>
<dbReference type="GeneCards" id="MIR1915HG"/>
<dbReference type="HGNC" id="HGNC:31448">
    <property type="gene designation" value="MIR1915HG"/>
</dbReference>
<dbReference type="neXtProt" id="NX_Q5T4H9"/>
<dbReference type="eggNOG" id="ENOG502TD4P">
    <property type="taxonomic scope" value="Eukaryota"/>
</dbReference>
<dbReference type="HOGENOM" id="CLU_156282_0_0_1"/>
<dbReference type="InParanoid" id="Q5T4H9"/>
<dbReference type="PAN-GO" id="Q5T4H9">
    <property type="GO annotations" value="0 GO annotations based on evolutionary models"/>
</dbReference>
<dbReference type="PhylomeDB" id="Q5T4H9"/>
<dbReference type="TreeFam" id="TF353352"/>
<dbReference type="PathwayCommons" id="Q5T4H9"/>
<dbReference type="BioGRID-ORCS" id="399726">
    <property type="hits" value="16 hits in 1123 CRISPR screens"/>
</dbReference>
<dbReference type="GenomeRNAi" id="399726"/>
<dbReference type="Pharos" id="Q5T4H9">
    <property type="development level" value="Tdark"/>
</dbReference>
<dbReference type="Proteomes" id="UP000005640">
    <property type="component" value="Unplaced"/>
</dbReference>
<dbReference type="RNAct" id="Q5T4H9">
    <property type="molecule type" value="protein"/>
</dbReference>
<proteinExistence type="uncertain"/>
<reference key="1">
    <citation type="journal article" date="2004" name="Nature">
        <title>The DNA sequence and comparative analysis of human chromosome 10.</title>
        <authorList>
            <person name="Deloukas P."/>
            <person name="Earthrowl M.E."/>
            <person name="Grafham D.V."/>
            <person name="Rubenfield M."/>
            <person name="French L."/>
            <person name="Steward C.A."/>
            <person name="Sims S.K."/>
            <person name="Jones M.C."/>
            <person name="Searle S."/>
            <person name="Scott C."/>
            <person name="Howe K."/>
            <person name="Hunt S.E."/>
            <person name="Andrews T.D."/>
            <person name="Gilbert J.G.R."/>
            <person name="Swarbreck D."/>
            <person name="Ashurst J.L."/>
            <person name="Taylor A."/>
            <person name="Battles J."/>
            <person name="Bird C.P."/>
            <person name="Ainscough R."/>
            <person name="Almeida J.P."/>
            <person name="Ashwell R.I.S."/>
            <person name="Ambrose K.D."/>
            <person name="Babbage A.K."/>
            <person name="Bagguley C.L."/>
            <person name="Bailey J."/>
            <person name="Banerjee R."/>
            <person name="Bates K."/>
            <person name="Beasley H."/>
            <person name="Bray-Allen S."/>
            <person name="Brown A.J."/>
            <person name="Brown J.Y."/>
            <person name="Burford D.C."/>
            <person name="Burrill W."/>
            <person name="Burton J."/>
            <person name="Cahill P."/>
            <person name="Camire D."/>
            <person name="Carter N.P."/>
            <person name="Chapman J.C."/>
            <person name="Clark S.Y."/>
            <person name="Clarke G."/>
            <person name="Clee C.M."/>
            <person name="Clegg S."/>
            <person name="Corby N."/>
            <person name="Coulson A."/>
            <person name="Dhami P."/>
            <person name="Dutta I."/>
            <person name="Dunn M."/>
            <person name="Faulkner L."/>
            <person name="Frankish A."/>
            <person name="Frankland J.A."/>
            <person name="Garner P."/>
            <person name="Garnett J."/>
            <person name="Gribble S."/>
            <person name="Griffiths C."/>
            <person name="Grocock R."/>
            <person name="Gustafson E."/>
            <person name="Hammond S."/>
            <person name="Harley J.L."/>
            <person name="Hart E."/>
            <person name="Heath P.D."/>
            <person name="Ho T.P."/>
            <person name="Hopkins B."/>
            <person name="Horne J."/>
            <person name="Howden P.J."/>
            <person name="Huckle E."/>
            <person name="Hynds C."/>
            <person name="Johnson C."/>
            <person name="Johnson D."/>
            <person name="Kana A."/>
            <person name="Kay M."/>
            <person name="Kimberley A.M."/>
            <person name="Kershaw J.K."/>
            <person name="Kokkinaki M."/>
            <person name="Laird G.K."/>
            <person name="Lawlor S."/>
            <person name="Lee H.M."/>
            <person name="Leongamornlert D.A."/>
            <person name="Laird G."/>
            <person name="Lloyd C."/>
            <person name="Lloyd D.M."/>
            <person name="Loveland J."/>
            <person name="Lovell J."/>
            <person name="McLaren S."/>
            <person name="McLay K.E."/>
            <person name="McMurray A."/>
            <person name="Mashreghi-Mohammadi M."/>
            <person name="Matthews L."/>
            <person name="Milne S."/>
            <person name="Nickerson T."/>
            <person name="Nguyen M."/>
            <person name="Overton-Larty E."/>
            <person name="Palmer S.A."/>
            <person name="Pearce A.V."/>
            <person name="Peck A.I."/>
            <person name="Pelan S."/>
            <person name="Phillimore B."/>
            <person name="Porter K."/>
            <person name="Rice C.M."/>
            <person name="Rogosin A."/>
            <person name="Ross M.T."/>
            <person name="Sarafidou T."/>
            <person name="Sehra H.K."/>
            <person name="Shownkeen R."/>
            <person name="Skuce C.D."/>
            <person name="Smith M."/>
            <person name="Standring L."/>
            <person name="Sycamore N."/>
            <person name="Tester J."/>
            <person name="Thorpe A."/>
            <person name="Torcasso W."/>
            <person name="Tracey A."/>
            <person name="Tromans A."/>
            <person name="Tsolas J."/>
            <person name="Wall M."/>
            <person name="Walsh J."/>
            <person name="Wang H."/>
            <person name="Weinstock K."/>
            <person name="West A.P."/>
            <person name="Willey D.L."/>
            <person name="Whitehead S.L."/>
            <person name="Wilming L."/>
            <person name="Wray P.W."/>
            <person name="Young L."/>
            <person name="Chen Y."/>
            <person name="Lovering R.C."/>
            <person name="Moschonas N.K."/>
            <person name="Siebert R."/>
            <person name="Fechtel K."/>
            <person name="Bentley D."/>
            <person name="Durbin R.M."/>
            <person name="Hubbard T."/>
            <person name="Doucette-Stamm L."/>
            <person name="Beck S."/>
            <person name="Smith D.R."/>
            <person name="Rogers J."/>
        </authorList>
    </citation>
    <scope>NUCLEOTIDE SEQUENCE [LARGE SCALE GENOMIC DNA]</scope>
</reference>
<reference key="2">
    <citation type="journal article" date="2004" name="Genome Res.">
        <title>The status, quality, and expansion of the NIH full-length cDNA project: the Mammalian Gene Collection (MGC).</title>
        <authorList>
            <consortium name="The MGC Project Team"/>
        </authorList>
    </citation>
    <scope>NUCLEOTIDE SEQUENCE [LARGE SCALE MRNA]</scope>
    <source>
        <tissue>Brain</tissue>
    </source>
</reference>
<name>CSC10_HUMAN</name>
<sequence length="136" mass="14851">MQSREPSGWRTAERRRGWRCRGVPTPSGDRGPGAARPAARGGAGETTGQQRPLQVPGASAAAARTRLLRWHHRVPSPRATRSPGSIRRTSPCSGGPDRPERPECADACCYLLDPFTLPLIQDFFRGCAASDFDRRD</sequence>